<feature type="chain" id="PRO_0000049126" description="Hepatocyte nuclear factor 1-alpha">
    <location>
        <begin position="1"/>
        <end position="559"/>
    </location>
</feature>
<feature type="domain" description="HNF-p1" evidence="5">
    <location>
        <begin position="13"/>
        <end position="44"/>
    </location>
</feature>
<feature type="domain" description="POU-specific atypical" evidence="4">
    <location>
        <begin position="78"/>
        <end position="173"/>
    </location>
</feature>
<feature type="DNA-binding region" description="Homeobox; HNF1-type" evidence="3">
    <location>
        <begin position="188"/>
        <end position="268"/>
    </location>
</feature>
<feature type="region of interest" description="Dimerization" evidence="1">
    <location>
        <begin position="14"/>
        <end position="43"/>
    </location>
</feature>
<feature type="region of interest" description="Disordered" evidence="6">
    <location>
        <begin position="49"/>
        <end position="73"/>
    </location>
</feature>
<feature type="region of interest" description="Interaction with DNA" evidence="1">
    <location>
        <begin position="121"/>
        <end position="123"/>
    </location>
</feature>
<feature type="region of interest" description="Interaction with DNA" evidence="1">
    <location>
        <begin position="134"/>
        <end position="140"/>
    </location>
</feature>
<feature type="region of interest" description="Interaction with DNA" evidence="1">
    <location>
        <begin position="146"/>
        <end position="149"/>
    </location>
</feature>
<feature type="region of interest" description="Interaction with DNA" evidence="1">
    <location>
        <begin position="192"/>
        <end position="195"/>
    </location>
</feature>
<feature type="region of interest" description="Interaction with DNA" evidence="1">
    <location>
        <begin position="252"/>
        <end position="254"/>
    </location>
</feature>
<feature type="region of interest" description="Interaction with DNA" evidence="1">
    <location>
        <begin position="259"/>
        <end position="262"/>
    </location>
</feature>
<feature type="region of interest" description="Disordered" evidence="6">
    <location>
        <begin position="492"/>
        <end position="559"/>
    </location>
</feature>
<feature type="short sequence motif" description="Nuclear localization signal" evidence="2">
    <location>
        <begin position="186"/>
        <end position="194"/>
    </location>
</feature>
<feature type="compositionally biased region" description="Basic and acidic residues" evidence="6">
    <location>
        <begin position="49"/>
        <end position="62"/>
    </location>
</feature>
<feature type="compositionally biased region" description="Polar residues" evidence="6">
    <location>
        <begin position="499"/>
        <end position="522"/>
    </location>
</feature>
<sequence>MEGEERKGEAGPGPGRLSALQEQLIWALLGSGLSREVLVHALGELERERVTPGAEKGDRGDGESSEEGEMDFPPPIFQELEALAPEEAARQRALVDQLLQEDPWRVAKLVKSYMQQHNLPQREVVESIGLNQSHLSQHLNKGTPMKNQKRAALYSWYVRKQGEISQQFTNARHALGSGEEQGEDVRKGRRNRFKWGPASQQILFHAYERQRNPSKEEREGLVEECNRAECLQRGVSPSQLAGLGSNLVTEVRVYNWFANRRKEEAFRHKLALDMPYNSQSASSTNHTLSHSPEQGMKYSQQITCDNLGSSRGHNGDRGLGGRLASPIQLEPSHTLLETHHHKPVSGGGPLPPVSTLTSLHSLSASPAPHHGLIMTSLPSVMSLGESSLLIGQTVPVINNVGGGFTTLQPISFQQQLHSTSQQQLTQQFQSHMGHHHSPFMATMAQLPCHMYSKSDMSHYPPSSLLSQAMVITDSSSLGTLTSLTTVRQILTTDPEEQTDQPIQEDSLHLQSPSPVPVSSGNLQLYPPSQSSESHPPHRLSSSPADINSYIPAQMVSTAQ</sequence>
<proteinExistence type="evidence at transcript level"/>
<comment type="function">
    <text evidence="1 7">Transcriptional activator that regulates the tissue specific expression of multiple genes, especially in pancreas and liver (By similarity). Binds to the promoter of the albumin gene.</text>
</comment>
<comment type="subunit">
    <text evidence="1">Binds DNA as a dimer.</text>
</comment>
<comment type="subcellular location">
    <subcellularLocation>
        <location evidence="3">Nucleus</location>
    </subcellularLocation>
</comment>
<comment type="tissue specificity">
    <text evidence="7">Expressed in liver, intestine, spleen and kidney.</text>
</comment>
<comment type="similarity">
    <text evidence="8">Belongs to the HNF1 homeobox family.</text>
</comment>
<gene>
    <name type="primary">hnf1a</name>
    <name type="synonym">hnf1</name>
    <name type="synonym">tcf1</name>
</gene>
<organism>
    <name type="scientific">Salmo salar</name>
    <name type="common">Atlantic salmon</name>
    <dbReference type="NCBI Taxonomy" id="8030"/>
    <lineage>
        <taxon>Eukaryota</taxon>
        <taxon>Metazoa</taxon>
        <taxon>Chordata</taxon>
        <taxon>Craniata</taxon>
        <taxon>Vertebrata</taxon>
        <taxon>Euteleostomi</taxon>
        <taxon>Actinopterygii</taxon>
        <taxon>Neopterygii</taxon>
        <taxon>Teleostei</taxon>
        <taxon>Protacanthopterygii</taxon>
        <taxon>Salmoniformes</taxon>
        <taxon>Salmonidae</taxon>
        <taxon>Salmoninae</taxon>
        <taxon>Salmo</taxon>
    </lineage>
</organism>
<accession>Q91474</accession>
<dbReference type="EMBL" id="X79486">
    <property type="protein sequence ID" value="CAA55985.1"/>
    <property type="molecule type" value="mRNA"/>
</dbReference>
<dbReference type="PIR" id="S54358">
    <property type="entry name" value="S54358"/>
</dbReference>
<dbReference type="RefSeq" id="NP_001117146.1">
    <property type="nucleotide sequence ID" value="NM_001123674.1"/>
</dbReference>
<dbReference type="SMR" id="Q91474"/>
<dbReference type="STRING" id="8030.ENSSSAP00000012471"/>
<dbReference type="PaxDb" id="8030-ENSSSAP00000012471"/>
<dbReference type="GeneID" id="100136586"/>
<dbReference type="KEGG" id="sasa:100136586"/>
<dbReference type="CTD" id="6927"/>
<dbReference type="OrthoDB" id="359823at7898"/>
<dbReference type="Proteomes" id="UP000087266">
    <property type="component" value="Chromosome ssa20"/>
</dbReference>
<dbReference type="GO" id="GO:0005634">
    <property type="term" value="C:nucleus"/>
    <property type="evidence" value="ECO:0007669"/>
    <property type="project" value="UniProtKB-SubCell"/>
</dbReference>
<dbReference type="GO" id="GO:0000981">
    <property type="term" value="F:DNA-binding transcription factor activity, RNA polymerase II-specific"/>
    <property type="evidence" value="ECO:0007669"/>
    <property type="project" value="TreeGrafter"/>
</dbReference>
<dbReference type="GO" id="GO:0000978">
    <property type="term" value="F:RNA polymerase II cis-regulatory region sequence-specific DNA binding"/>
    <property type="evidence" value="ECO:0007669"/>
    <property type="project" value="TreeGrafter"/>
</dbReference>
<dbReference type="GO" id="GO:0000976">
    <property type="term" value="F:transcription cis-regulatory region binding"/>
    <property type="evidence" value="ECO:0000250"/>
    <property type="project" value="UniProtKB"/>
</dbReference>
<dbReference type="GO" id="GO:0030073">
    <property type="term" value="P:insulin secretion"/>
    <property type="evidence" value="ECO:0007669"/>
    <property type="project" value="InterPro"/>
</dbReference>
<dbReference type="GO" id="GO:0001889">
    <property type="term" value="P:liver development"/>
    <property type="evidence" value="ECO:0007669"/>
    <property type="project" value="InterPro"/>
</dbReference>
<dbReference type="GO" id="GO:0031016">
    <property type="term" value="P:pancreas development"/>
    <property type="evidence" value="ECO:0007669"/>
    <property type="project" value="InterPro"/>
</dbReference>
<dbReference type="GO" id="GO:0045893">
    <property type="term" value="P:positive regulation of DNA-templated transcription"/>
    <property type="evidence" value="ECO:0000250"/>
    <property type="project" value="UniProtKB"/>
</dbReference>
<dbReference type="CDD" id="cd00086">
    <property type="entry name" value="homeodomain"/>
    <property type="match status" value="1"/>
</dbReference>
<dbReference type="FunFam" id="1.10.10.60:FF:000043">
    <property type="entry name" value="Hepatocyte nuclear factor 1-beta"/>
    <property type="match status" value="1"/>
</dbReference>
<dbReference type="FunFam" id="1.10.260.40:FF:000009">
    <property type="entry name" value="Hepatocyte nuclear factor 1-beta"/>
    <property type="match status" value="1"/>
</dbReference>
<dbReference type="Gene3D" id="1.10.10.60">
    <property type="entry name" value="Homeodomain-like"/>
    <property type="match status" value="1"/>
</dbReference>
<dbReference type="Gene3D" id="1.10.260.40">
    <property type="entry name" value="lambda repressor-like DNA-binding domains"/>
    <property type="match status" value="1"/>
</dbReference>
<dbReference type="InterPro" id="IPR001356">
    <property type="entry name" value="HD"/>
</dbReference>
<dbReference type="InterPro" id="IPR039066">
    <property type="entry name" value="HNF-1"/>
</dbReference>
<dbReference type="InterPro" id="IPR006899">
    <property type="entry name" value="HNF-1_N"/>
</dbReference>
<dbReference type="InterPro" id="IPR044869">
    <property type="entry name" value="HNF-1_POU"/>
</dbReference>
<dbReference type="InterPro" id="IPR006898">
    <property type="entry name" value="HNF1a_C"/>
</dbReference>
<dbReference type="InterPro" id="IPR006897">
    <property type="entry name" value="HNF1b_C"/>
</dbReference>
<dbReference type="InterPro" id="IPR044866">
    <property type="entry name" value="HNF_P1"/>
</dbReference>
<dbReference type="InterPro" id="IPR009057">
    <property type="entry name" value="Homeodomain-like_sf"/>
</dbReference>
<dbReference type="InterPro" id="IPR010982">
    <property type="entry name" value="Lambda_DNA-bd_dom_sf"/>
</dbReference>
<dbReference type="PANTHER" id="PTHR11568">
    <property type="entry name" value="HEPATOCYTE NUCLEAR FACTOR 1"/>
    <property type="match status" value="1"/>
</dbReference>
<dbReference type="PANTHER" id="PTHR11568:SF4">
    <property type="entry name" value="HEPATOCYTE NUCLEAR FACTOR 1-ALPHA"/>
    <property type="match status" value="1"/>
</dbReference>
<dbReference type="Pfam" id="PF04814">
    <property type="entry name" value="HNF-1_N"/>
    <property type="match status" value="1"/>
</dbReference>
<dbReference type="Pfam" id="PF04813">
    <property type="entry name" value="HNF-1A_C"/>
    <property type="match status" value="1"/>
</dbReference>
<dbReference type="Pfam" id="PF04812">
    <property type="entry name" value="HNF-1B_C"/>
    <property type="match status" value="1"/>
</dbReference>
<dbReference type="SMART" id="SM00389">
    <property type="entry name" value="HOX"/>
    <property type="match status" value="1"/>
</dbReference>
<dbReference type="SUPFAM" id="SSF46689">
    <property type="entry name" value="Homeodomain-like"/>
    <property type="match status" value="1"/>
</dbReference>
<dbReference type="SUPFAM" id="SSF47413">
    <property type="entry name" value="lambda repressor-like DNA-binding domains"/>
    <property type="match status" value="1"/>
</dbReference>
<dbReference type="PROSITE" id="PS51937">
    <property type="entry name" value="HNF_P1"/>
    <property type="match status" value="1"/>
</dbReference>
<dbReference type="PROSITE" id="PS00027">
    <property type="entry name" value="HOMEOBOX_1"/>
    <property type="match status" value="1"/>
</dbReference>
<dbReference type="PROSITE" id="PS50071">
    <property type="entry name" value="HOMEOBOX_2"/>
    <property type="match status" value="1"/>
</dbReference>
<dbReference type="PROSITE" id="PS51936">
    <property type="entry name" value="POU_4"/>
    <property type="match status" value="1"/>
</dbReference>
<keyword id="KW-0010">Activator</keyword>
<keyword id="KW-0238">DNA-binding</keyword>
<keyword id="KW-0371">Homeobox</keyword>
<keyword id="KW-0539">Nucleus</keyword>
<keyword id="KW-1185">Reference proteome</keyword>
<keyword id="KW-0804">Transcription</keyword>
<keyword id="KW-0805">Transcription regulation</keyword>
<evidence type="ECO:0000250" key="1"/>
<evidence type="ECO:0000255" key="2"/>
<evidence type="ECO:0000255" key="3">
    <source>
        <dbReference type="PROSITE-ProRule" id="PRU00108"/>
    </source>
</evidence>
<evidence type="ECO:0000255" key="4">
    <source>
        <dbReference type="PROSITE-ProRule" id="PRU01285"/>
    </source>
</evidence>
<evidence type="ECO:0000255" key="5">
    <source>
        <dbReference type="PROSITE-ProRule" id="PRU01286"/>
    </source>
</evidence>
<evidence type="ECO:0000256" key="6">
    <source>
        <dbReference type="SAM" id="MobiDB-lite"/>
    </source>
</evidence>
<evidence type="ECO:0000269" key="7">
    <source>
    </source>
</evidence>
<evidence type="ECO:0000305" key="8"/>
<protein>
    <recommendedName>
        <fullName>Hepatocyte nuclear factor 1-alpha</fullName>
        <shortName>HNF-1-alpha</shortName>
        <shortName>HNF-1A</shortName>
    </recommendedName>
    <alternativeName>
        <fullName>Transcription factor 1</fullName>
        <shortName>TCF-1</shortName>
    </alternativeName>
    <alternativeName>
        <fullName>sHNF1</fullName>
    </alternativeName>
</protein>
<name>HNF1A_SALSA</name>
<reference key="1">
    <citation type="journal article" date="1995" name="J. Mol. Biol.">
        <title>Salmon HNF1: cDNA sequence, evolution, tissue specificity and binding to the salmon serum albumin promoter.</title>
        <authorList>
            <person name="Deryckere F."/>
            <person name="Byrnes L."/>
            <person name="Wagner A."/>
            <person name="McMorrow T."/>
            <person name="Gannon F."/>
        </authorList>
    </citation>
    <scope>NUCLEOTIDE SEQUENCE [MRNA]</scope>
    <scope>FUNCTION</scope>
    <scope>TISSUE SPECIFICITY</scope>
    <source>
        <tissue>Liver</tissue>
    </source>
</reference>